<keyword id="KW-0997">Cell inner membrane</keyword>
<keyword id="KW-1003">Cell membrane</keyword>
<keyword id="KW-0472">Membrane</keyword>
<keyword id="KW-0520">NAD</keyword>
<keyword id="KW-0874">Quinone</keyword>
<keyword id="KW-1278">Translocase</keyword>
<keyword id="KW-0812">Transmembrane</keyword>
<keyword id="KW-1133">Transmembrane helix</keyword>
<keyword id="KW-0830">Ubiquinone</keyword>
<proteinExistence type="inferred from homology"/>
<gene>
    <name evidence="1" type="primary">nuoH</name>
    <name type="ordered locus">jhp_1188</name>
</gene>
<comment type="function">
    <text evidence="1">NDH-1 shuttles electrons from NADH, via FMN and iron-sulfur (Fe-S) centers, to quinones in the respiratory chain. The immediate electron acceptor for the enzyme in this species is believed to be ubiquinone. Couples the redox reaction to proton translocation (for every two electrons transferred, four hydrogen ions are translocated across the cytoplasmic membrane), and thus conserves the redox energy in a proton gradient. This subunit may bind ubiquinone.</text>
</comment>
<comment type="catalytic activity">
    <reaction evidence="1">
        <text>a quinone + NADH + 5 H(+)(in) = a quinol + NAD(+) + 4 H(+)(out)</text>
        <dbReference type="Rhea" id="RHEA:57888"/>
        <dbReference type="ChEBI" id="CHEBI:15378"/>
        <dbReference type="ChEBI" id="CHEBI:24646"/>
        <dbReference type="ChEBI" id="CHEBI:57540"/>
        <dbReference type="ChEBI" id="CHEBI:57945"/>
        <dbReference type="ChEBI" id="CHEBI:132124"/>
    </reaction>
</comment>
<comment type="subunit">
    <text evidence="1">NDH-1 is composed of 14 different subunits. Subunits NuoA, H, J, K, L, M, N constitute the membrane sector of the complex.</text>
</comment>
<comment type="subcellular location">
    <subcellularLocation>
        <location evidence="1">Cell inner membrane</location>
        <topology evidence="1">Multi-pass membrane protein</topology>
    </subcellularLocation>
</comment>
<comment type="similarity">
    <text evidence="1">Belongs to the complex I subunit 1 family.</text>
</comment>
<reference key="1">
    <citation type="journal article" date="1999" name="Nature">
        <title>Genomic sequence comparison of two unrelated isolates of the human gastric pathogen Helicobacter pylori.</title>
        <authorList>
            <person name="Alm R.A."/>
            <person name="Ling L.-S.L."/>
            <person name="Moir D.T."/>
            <person name="King B.L."/>
            <person name="Brown E.D."/>
            <person name="Doig P.C."/>
            <person name="Smith D.R."/>
            <person name="Noonan B."/>
            <person name="Guild B.C."/>
            <person name="deJonge B.L."/>
            <person name="Carmel G."/>
            <person name="Tummino P.J."/>
            <person name="Caruso A."/>
            <person name="Uria-Nickelsen M."/>
            <person name="Mills D.M."/>
            <person name="Ives C."/>
            <person name="Gibson R."/>
            <person name="Merberg D."/>
            <person name="Mills S.D."/>
            <person name="Jiang Q."/>
            <person name="Taylor D.E."/>
            <person name="Vovis G.F."/>
            <person name="Trust T.J."/>
        </authorList>
    </citation>
    <scope>NUCLEOTIDE SEQUENCE [LARGE SCALE GENOMIC DNA]</scope>
    <source>
        <strain>J99 / ATCC 700824</strain>
    </source>
</reference>
<protein>
    <recommendedName>
        <fullName evidence="1">NADH-quinone oxidoreductase subunit H</fullName>
        <ecNumber evidence="1">7.1.1.-</ecNumber>
    </recommendedName>
    <alternativeName>
        <fullName evidence="1">NADH dehydrogenase I subunit H</fullName>
    </alternativeName>
    <alternativeName>
        <fullName evidence="1">NDH-1 subunit H</fullName>
    </alternativeName>
</protein>
<organism>
    <name type="scientific">Helicobacter pylori (strain J99 / ATCC 700824)</name>
    <name type="common">Campylobacter pylori J99</name>
    <dbReference type="NCBI Taxonomy" id="85963"/>
    <lineage>
        <taxon>Bacteria</taxon>
        <taxon>Pseudomonadati</taxon>
        <taxon>Campylobacterota</taxon>
        <taxon>Epsilonproteobacteria</taxon>
        <taxon>Campylobacterales</taxon>
        <taxon>Helicobacteraceae</taxon>
        <taxon>Helicobacter</taxon>
    </lineage>
</organism>
<dbReference type="EC" id="7.1.1.-" evidence="1"/>
<dbReference type="EMBL" id="AE001439">
    <property type="protein sequence ID" value="AAD06754.1"/>
    <property type="molecule type" value="Genomic_DNA"/>
</dbReference>
<dbReference type="PIR" id="A71839">
    <property type="entry name" value="A71839"/>
</dbReference>
<dbReference type="RefSeq" id="WP_001277310.1">
    <property type="nucleotide sequence ID" value="NZ_CP011330.1"/>
</dbReference>
<dbReference type="SMR" id="Q9ZJW0"/>
<dbReference type="KEGG" id="hpj:jhp_1188"/>
<dbReference type="PATRIC" id="fig|85963.30.peg.1384"/>
<dbReference type="eggNOG" id="COG1005">
    <property type="taxonomic scope" value="Bacteria"/>
</dbReference>
<dbReference type="Proteomes" id="UP000000804">
    <property type="component" value="Chromosome"/>
</dbReference>
<dbReference type="GO" id="GO:0005886">
    <property type="term" value="C:plasma membrane"/>
    <property type="evidence" value="ECO:0007669"/>
    <property type="project" value="UniProtKB-SubCell"/>
</dbReference>
<dbReference type="GO" id="GO:0003954">
    <property type="term" value="F:NADH dehydrogenase activity"/>
    <property type="evidence" value="ECO:0007669"/>
    <property type="project" value="TreeGrafter"/>
</dbReference>
<dbReference type="GO" id="GO:0016655">
    <property type="term" value="F:oxidoreductase activity, acting on NAD(P)H, quinone or similar compound as acceptor"/>
    <property type="evidence" value="ECO:0007669"/>
    <property type="project" value="UniProtKB-UniRule"/>
</dbReference>
<dbReference type="GO" id="GO:0048038">
    <property type="term" value="F:quinone binding"/>
    <property type="evidence" value="ECO:0007669"/>
    <property type="project" value="UniProtKB-KW"/>
</dbReference>
<dbReference type="GO" id="GO:0009060">
    <property type="term" value="P:aerobic respiration"/>
    <property type="evidence" value="ECO:0007669"/>
    <property type="project" value="TreeGrafter"/>
</dbReference>
<dbReference type="HAMAP" id="MF_01350">
    <property type="entry name" value="NDH1_NuoH"/>
    <property type="match status" value="1"/>
</dbReference>
<dbReference type="InterPro" id="IPR001694">
    <property type="entry name" value="NADH_UbQ_OxRdtase_su1/FPO"/>
</dbReference>
<dbReference type="InterPro" id="IPR018086">
    <property type="entry name" value="NADH_UbQ_OxRdtase_su1_CS"/>
</dbReference>
<dbReference type="NCBIfam" id="NF004741">
    <property type="entry name" value="PRK06076.1-2"/>
    <property type="match status" value="1"/>
</dbReference>
<dbReference type="PANTHER" id="PTHR11432">
    <property type="entry name" value="NADH DEHYDROGENASE SUBUNIT 1"/>
    <property type="match status" value="1"/>
</dbReference>
<dbReference type="PANTHER" id="PTHR11432:SF3">
    <property type="entry name" value="NADH-UBIQUINONE OXIDOREDUCTASE CHAIN 1"/>
    <property type="match status" value="1"/>
</dbReference>
<dbReference type="Pfam" id="PF00146">
    <property type="entry name" value="NADHdh"/>
    <property type="match status" value="1"/>
</dbReference>
<dbReference type="PROSITE" id="PS00667">
    <property type="entry name" value="COMPLEX1_ND1_1"/>
    <property type="match status" value="1"/>
</dbReference>
<name>NUOH_HELPJ</name>
<sequence length="329" mass="36330">MSAYIIETLIKILILVAVFSALGGFATYIERKVLAYFQRRLGPCYVGPFGLLQVAADGIKLFTKEDIIPQGANKFIFTLAPIIAMVSAFVSMAPIPFFPNFTLFGYEIKPLISDINIGFLFFLAVGSAGIYAPILAGLASNNKYSLIGSARATIQLLSFEVVSTLTILAPLMVVGSLSLVEINHYQSGGFLDWLVFKQPLAFVLFLIASYAELNRTPFDLLEHEAEIVAGYCTEYSGLKWGMFFLAEYAHLFAFSFVISIVFFGGFNAWGFIPGGIAILIKAGFFVFLSMWVRATYPHVRPDQLMNMCWKIMLPLALLNIVLTGIVILI</sequence>
<feature type="chain" id="PRO_0000240080" description="NADH-quinone oxidoreductase subunit H">
    <location>
        <begin position="1"/>
        <end position="329"/>
    </location>
</feature>
<feature type="transmembrane region" description="Helical" evidence="1">
    <location>
        <begin position="9"/>
        <end position="29"/>
    </location>
</feature>
<feature type="transmembrane region" description="Helical" evidence="1">
    <location>
        <begin position="42"/>
        <end position="62"/>
    </location>
</feature>
<feature type="transmembrane region" description="Helical" evidence="1">
    <location>
        <begin position="75"/>
        <end position="95"/>
    </location>
</feature>
<feature type="transmembrane region" description="Helical" evidence="1">
    <location>
        <begin position="117"/>
        <end position="137"/>
    </location>
</feature>
<feature type="transmembrane region" description="Helical" evidence="1">
    <location>
        <begin position="154"/>
        <end position="174"/>
    </location>
</feature>
<feature type="transmembrane region" description="Helical" evidence="1">
    <location>
        <begin position="188"/>
        <end position="208"/>
    </location>
</feature>
<feature type="transmembrane region" description="Helical" evidence="1">
    <location>
        <begin position="238"/>
        <end position="258"/>
    </location>
</feature>
<feature type="transmembrane region" description="Helical" evidence="1">
    <location>
        <begin position="269"/>
        <end position="291"/>
    </location>
</feature>
<feature type="transmembrane region" description="Helical" evidence="1">
    <location>
        <begin position="309"/>
        <end position="329"/>
    </location>
</feature>
<accession>Q9ZJW0</accession>
<evidence type="ECO:0000255" key="1">
    <source>
        <dbReference type="HAMAP-Rule" id="MF_01350"/>
    </source>
</evidence>